<comment type="function">
    <text evidence="1">Allows the formation of correctly charged Gln-tRNA(Gln) through the transamidation of misacylated Glu-tRNA(Gln) in organisms which lack glutaminyl-tRNA synthetase. The reaction takes place in the presence of glutamine and ATP through an activated gamma-phospho-Glu-tRNA(Gln).</text>
</comment>
<comment type="catalytic activity">
    <reaction evidence="1">
        <text>L-glutamyl-tRNA(Gln) + L-glutamine + ATP + H2O = L-glutaminyl-tRNA(Gln) + L-glutamate + ADP + phosphate + H(+)</text>
        <dbReference type="Rhea" id="RHEA:17521"/>
        <dbReference type="Rhea" id="RHEA-COMP:9681"/>
        <dbReference type="Rhea" id="RHEA-COMP:9684"/>
        <dbReference type="ChEBI" id="CHEBI:15377"/>
        <dbReference type="ChEBI" id="CHEBI:15378"/>
        <dbReference type="ChEBI" id="CHEBI:29985"/>
        <dbReference type="ChEBI" id="CHEBI:30616"/>
        <dbReference type="ChEBI" id="CHEBI:43474"/>
        <dbReference type="ChEBI" id="CHEBI:58359"/>
        <dbReference type="ChEBI" id="CHEBI:78520"/>
        <dbReference type="ChEBI" id="CHEBI:78521"/>
        <dbReference type="ChEBI" id="CHEBI:456216"/>
        <dbReference type="EC" id="6.3.5.7"/>
    </reaction>
</comment>
<comment type="subunit">
    <text evidence="1">Heterotrimer of A, B and C subunits.</text>
</comment>
<comment type="similarity">
    <text evidence="1">Belongs to the amidase family. GatA subfamily.</text>
</comment>
<evidence type="ECO:0000255" key="1">
    <source>
        <dbReference type="HAMAP-Rule" id="MF_00120"/>
    </source>
</evidence>
<reference key="1">
    <citation type="journal article" date="2005" name="Science">
        <title>Genome sequence of the PCE-dechlorinating bacterium Dehalococcoides ethenogenes.</title>
        <authorList>
            <person name="Seshadri R."/>
            <person name="Adrian L."/>
            <person name="Fouts D.E."/>
            <person name="Eisen J.A."/>
            <person name="Phillippy A.M."/>
            <person name="Methe B.A."/>
            <person name="Ward N.L."/>
            <person name="Nelson W.C."/>
            <person name="DeBoy R.T."/>
            <person name="Khouri H.M."/>
            <person name="Kolonay J.F."/>
            <person name="Dodson R.J."/>
            <person name="Daugherty S.C."/>
            <person name="Brinkac L.M."/>
            <person name="Sullivan S.A."/>
            <person name="Madupu R."/>
            <person name="Nelson K.E."/>
            <person name="Kang K.H."/>
            <person name="Impraim M."/>
            <person name="Tran K."/>
            <person name="Robinson J.M."/>
            <person name="Forberger H.A."/>
            <person name="Fraser C.M."/>
            <person name="Zinder S.H."/>
            <person name="Heidelberg J.F."/>
        </authorList>
    </citation>
    <scope>NUCLEOTIDE SEQUENCE [LARGE SCALE GENOMIC DNA]</scope>
    <source>
        <strain>ATCC BAA-2266 / KCTC 15142 / 195</strain>
    </source>
</reference>
<accession>Q3Z6V3</accession>
<gene>
    <name evidence="1" type="primary">gatA</name>
    <name type="ordered locus">DET1335</name>
</gene>
<organism>
    <name type="scientific">Dehalococcoides mccartyi (strain ATCC BAA-2266 / KCTC 15142 / 195)</name>
    <name type="common">Dehalococcoides ethenogenes (strain 195)</name>
    <dbReference type="NCBI Taxonomy" id="243164"/>
    <lineage>
        <taxon>Bacteria</taxon>
        <taxon>Bacillati</taxon>
        <taxon>Chloroflexota</taxon>
        <taxon>Dehalococcoidia</taxon>
        <taxon>Dehalococcoidales</taxon>
        <taxon>Dehalococcoidaceae</taxon>
        <taxon>Dehalococcoides</taxon>
    </lineage>
</organism>
<dbReference type="EC" id="6.3.5.7" evidence="1"/>
<dbReference type="EMBL" id="CP000027">
    <property type="protein sequence ID" value="AAW39442.1"/>
    <property type="molecule type" value="Genomic_DNA"/>
</dbReference>
<dbReference type="RefSeq" id="WP_010937023.1">
    <property type="nucleotide sequence ID" value="NC_002936.3"/>
</dbReference>
<dbReference type="SMR" id="Q3Z6V3"/>
<dbReference type="FunCoup" id="Q3Z6V3">
    <property type="interactions" value="345"/>
</dbReference>
<dbReference type="STRING" id="243164.DET1335"/>
<dbReference type="GeneID" id="3229402"/>
<dbReference type="KEGG" id="det:DET1335"/>
<dbReference type="PATRIC" id="fig|243164.10.peg.1264"/>
<dbReference type="eggNOG" id="COG0154">
    <property type="taxonomic scope" value="Bacteria"/>
</dbReference>
<dbReference type="HOGENOM" id="CLU_009600_0_3_0"/>
<dbReference type="InParanoid" id="Q3Z6V3"/>
<dbReference type="Proteomes" id="UP000008289">
    <property type="component" value="Chromosome"/>
</dbReference>
<dbReference type="GO" id="GO:0030956">
    <property type="term" value="C:glutamyl-tRNA(Gln) amidotransferase complex"/>
    <property type="evidence" value="ECO:0007669"/>
    <property type="project" value="InterPro"/>
</dbReference>
<dbReference type="GO" id="GO:0005524">
    <property type="term" value="F:ATP binding"/>
    <property type="evidence" value="ECO:0007669"/>
    <property type="project" value="UniProtKB-KW"/>
</dbReference>
<dbReference type="GO" id="GO:0050567">
    <property type="term" value="F:glutaminyl-tRNA synthase (glutamine-hydrolyzing) activity"/>
    <property type="evidence" value="ECO:0007669"/>
    <property type="project" value="UniProtKB-UniRule"/>
</dbReference>
<dbReference type="GO" id="GO:0006412">
    <property type="term" value="P:translation"/>
    <property type="evidence" value="ECO:0007669"/>
    <property type="project" value="UniProtKB-UniRule"/>
</dbReference>
<dbReference type="Gene3D" id="3.90.1300.10">
    <property type="entry name" value="Amidase signature (AS) domain"/>
    <property type="match status" value="1"/>
</dbReference>
<dbReference type="HAMAP" id="MF_00120">
    <property type="entry name" value="GatA"/>
    <property type="match status" value="1"/>
</dbReference>
<dbReference type="InterPro" id="IPR000120">
    <property type="entry name" value="Amidase"/>
</dbReference>
<dbReference type="InterPro" id="IPR020556">
    <property type="entry name" value="Amidase_CS"/>
</dbReference>
<dbReference type="InterPro" id="IPR023631">
    <property type="entry name" value="Amidase_dom"/>
</dbReference>
<dbReference type="InterPro" id="IPR036928">
    <property type="entry name" value="AS_sf"/>
</dbReference>
<dbReference type="InterPro" id="IPR004412">
    <property type="entry name" value="GatA"/>
</dbReference>
<dbReference type="NCBIfam" id="TIGR00132">
    <property type="entry name" value="gatA"/>
    <property type="match status" value="1"/>
</dbReference>
<dbReference type="PANTHER" id="PTHR11895:SF151">
    <property type="entry name" value="GLUTAMYL-TRNA(GLN) AMIDOTRANSFERASE SUBUNIT A"/>
    <property type="match status" value="1"/>
</dbReference>
<dbReference type="PANTHER" id="PTHR11895">
    <property type="entry name" value="TRANSAMIDASE"/>
    <property type="match status" value="1"/>
</dbReference>
<dbReference type="Pfam" id="PF01425">
    <property type="entry name" value="Amidase"/>
    <property type="match status" value="1"/>
</dbReference>
<dbReference type="SUPFAM" id="SSF75304">
    <property type="entry name" value="Amidase signature (AS) enzymes"/>
    <property type="match status" value="1"/>
</dbReference>
<dbReference type="PROSITE" id="PS00571">
    <property type="entry name" value="AMIDASES"/>
    <property type="match status" value="1"/>
</dbReference>
<proteinExistence type="inferred from homology"/>
<protein>
    <recommendedName>
        <fullName evidence="1">Glutamyl-tRNA(Gln) amidotransferase subunit A</fullName>
        <shortName evidence="1">Glu-ADT subunit A</shortName>
        <ecNumber evidence="1">6.3.5.7</ecNumber>
    </recommendedName>
</protein>
<sequence>MTDLIKLTIAQSHKLLKERKLSSAELTRAHLDRIEKLEPEIKAFMTVCPESALAQAKAADEAIKQGHIRPLTGIPMALKDVLCTKGIRTTCSSRMLENFVPPYNAHVVDKLAEEGAVLLGKTNMDEFAMGSSTENSAFFTTHNPWNTAKVPGGSSGGSAACVAASEAVFSLGSDTGGSIRQPASFCSVTGLKPSYGMVSRYGLVAFASSLDQIGPFTKDVLDCALVMNAIAGFDDRDSTSVPQTAPDFSSCLDGDIKGFKLGVPKEYFSHNMRADIAEKINDALGVLSGLGASVDREVSLPHTPYALAVYYILAPSEASANLSRYDGVKYGYSYNQTENMWEAMEKTRAKGFGPEVKRRIMIGTYALSAGYYDAWYVKAQKVRTLISQEFNNAFEKYDALITPTTPNLPFSIGEKLSDPFEMYMCDTCTIPINIAGLPAISIPAGFVDGLPVGLQIIGKPFADQTIMRIAHAFQCATAWHKETPRL</sequence>
<keyword id="KW-0067">ATP-binding</keyword>
<keyword id="KW-0436">Ligase</keyword>
<keyword id="KW-0547">Nucleotide-binding</keyword>
<keyword id="KW-0648">Protein biosynthesis</keyword>
<name>GATA_DEHM1</name>
<feature type="chain" id="PRO_0000241093" description="Glutamyl-tRNA(Gln) amidotransferase subunit A">
    <location>
        <begin position="1"/>
        <end position="486"/>
    </location>
</feature>
<feature type="active site" description="Charge relay system" evidence="1">
    <location>
        <position position="79"/>
    </location>
</feature>
<feature type="active site" description="Charge relay system" evidence="1">
    <location>
        <position position="154"/>
    </location>
</feature>
<feature type="active site" description="Acyl-ester intermediate" evidence="1">
    <location>
        <position position="178"/>
    </location>
</feature>